<organism>
    <name type="scientific">Listeria innocua serovar 6a (strain ATCC BAA-680 / CLIP 11262)</name>
    <dbReference type="NCBI Taxonomy" id="272626"/>
    <lineage>
        <taxon>Bacteria</taxon>
        <taxon>Bacillati</taxon>
        <taxon>Bacillota</taxon>
        <taxon>Bacilli</taxon>
        <taxon>Bacillales</taxon>
        <taxon>Listeriaceae</taxon>
        <taxon>Listeria</taxon>
    </lineage>
</organism>
<reference key="1">
    <citation type="journal article" date="2001" name="Science">
        <title>Comparative genomics of Listeria species.</title>
        <authorList>
            <person name="Glaser P."/>
            <person name="Frangeul L."/>
            <person name="Buchrieser C."/>
            <person name="Rusniok C."/>
            <person name="Amend A."/>
            <person name="Baquero F."/>
            <person name="Berche P."/>
            <person name="Bloecker H."/>
            <person name="Brandt P."/>
            <person name="Chakraborty T."/>
            <person name="Charbit A."/>
            <person name="Chetouani F."/>
            <person name="Couve E."/>
            <person name="de Daruvar A."/>
            <person name="Dehoux P."/>
            <person name="Domann E."/>
            <person name="Dominguez-Bernal G."/>
            <person name="Duchaud E."/>
            <person name="Durant L."/>
            <person name="Dussurget O."/>
            <person name="Entian K.-D."/>
            <person name="Fsihi H."/>
            <person name="Garcia-del Portillo F."/>
            <person name="Garrido P."/>
            <person name="Gautier L."/>
            <person name="Goebel W."/>
            <person name="Gomez-Lopez N."/>
            <person name="Hain T."/>
            <person name="Hauf J."/>
            <person name="Jackson D."/>
            <person name="Jones L.-M."/>
            <person name="Kaerst U."/>
            <person name="Kreft J."/>
            <person name="Kuhn M."/>
            <person name="Kunst F."/>
            <person name="Kurapkat G."/>
            <person name="Madueno E."/>
            <person name="Maitournam A."/>
            <person name="Mata Vicente J."/>
            <person name="Ng E."/>
            <person name="Nedjari H."/>
            <person name="Nordsiek G."/>
            <person name="Novella S."/>
            <person name="de Pablos B."/>
            <person name="Perez-Diaz J.-C."/>
            <person name="Purcell R."/>
            <person name="Remmel B."/>
            <person name="Rose M."/>
            <person name="Schlueter T."/>
            <person name="Simoes N."/>
            <person name="Tierrez A."/>
            <person name="Vazquez-Boland J.-A."/>
            <person name="Voss H."/>
            <person name="Wehland J."/>
            <person name="Cossart P."/>
        </authorList>
    </citation>
    <scope>NUCLEOTIDE SEQUENCE [LARGE SCALE GENOMIC DNA]</scope>
    <source>
        <strain>ATCC BAA-680 / CLIP 11262</strain>
    </source>
</reference>
<protein>
    <recommendedName>
        <fullName evidence="1">Putative competence-damage inducible protein</fullName>
    </recommendedName>
</protein>
<gene>
    <name evidence="1" type="primary">cinA</name>
    <name type="ordered locus">lin1434</name>
</gene>
<proteinExistence type="inferred from homology"/>
<accession>Q92BV8</accession>
<name>CINA_LISIN</name>
<dbReference type="EMBL" id="AL596168">
    <property type="protein sequence ID" value="CAC96665.1"/>
    <property type="molecule type" value="Genomic_DNA"/>
</dbReference>
<dbReference type="PIR" id="AI1611">
    <property type="entry name" value="AI1611"/>
</dbReference>
<dbReference type="RefSeq" id="WP_010991531.1">
    <property type="nucleotide sequence ID" value="NC_003212.1"/>
</dbReference>
<dbReference type="SMR" id="Q92BV8"/>
<dbReference type="STRING" id="272626.gene:17565765"/>
<dbReference type="GeneID" id="93234815"/>
<dbReference type="KEGG" id="lin:cinA"/>
<dbReference type="eggNOG" id="COG1058">
    <property type="taxonomic scope" value="Bacteria"/>
</dbReference>
<dbReference type="eggNOG" id="COG1546">
    <property type="taxonomic scope" value="Bacteria"/>
</dbReference>
<dbReference type="HOGENOM" id="CLU_030805_9_3_9"/>
<dbReference type="OrthoDB" id="9801454at2"/>
<dbReference type="Proteomes" id="UP000002513">
    <property type="component" value="Chromosome"/>
</dbReference>
<dbReference type="CDD" id="cd00885">
    <property type="entry name" value="cinA"/>
    <property type="match status" value="1"/>
</dbReference>
<dbReference type="Gene3D" id="3.90.950.20">
    <property type="entry name" value="CinA-like"/>
    <property type="match status" value="1"/>
</dbReference>
<dbReference type="Gene3D" id="3.40.980.10">
    <property type="entry name" value="MoaB/Mog-like domain"/>
    <property type="match status" value="1"/>
</dbReference>
<dbReference type="HAMAP" id="MF_00226_B">
    <property type="entry name" value="CinA_B"/>
    <property type="match status" value="1"/>
</dbReference>
<dbReference type="InterPro" id="IPR050101">
    <property type="entry name" value="CinA"/>
</dbReference>
<dbReference type="InterPro" id="IPR036653">
    <property type="entry name" value="CinA-like_C"/>
</dbReference>
<dbReference type="InterPro" id="IPR008136">
    <property type="entry name" value="CinA_C"/>
</dbReference>
<dbReference type="InterPro" id="IPR041424">
    <property type="entry name" value="CinA_KH"/>
</dbReference>
<dbReference type="InterPro" id="IPR008135">
    <property type="entry name" value="Competence-induced_CinA"/>
</dbReference>
<dbReference type="InterPro" id="IPR036425">
    <property type="entry name" value="MoaB/Mog-like_dom_sf"/>
</dbReference>
<dbReference type="InterPro" id="IPR001453">
    <property type="entry name" value="MoaB/Mog_dom"/>
</dbReference>
<dbReference type="NCBIfam" id="TIGR00200">
    <property type="entry name" value="cinA_nterm"/>
    <property type="match status" value="1"/>
</dbReference>
<dbReference type="NCBIfam" id="TIGR00177">
    <property type="entry name" value="molyb_syn"/>
    <property type="match status" value="1"/>
</dbReference>
<dbReference type="NCBIfam" id="TIGR00199">
    <property type="entry name" value="PncC_domain"/>
    <property type="match status" value="1"/>
</dbReference>
<dbReference type="NCBIfam" id="NF001813">
    <property type="entry name" value="PRK00549.1"/>
    <property type="match status" value="1"/>
</dbReference>
<dbReference type="PANTHER" id="PTHR13939">
    <property type="entry name" value="NICOTINAMIDE-NUCLEOTIDE AMIDOHYDROLASE PNCC"/>
    <property type="match status" value="1"/>
</dbReference>
<dbReference type="PANTHER" id="PTHR13939:SF0">
    <property type="entry name" value="NMN AMIDOHYDROLASE-LIKE PROTEIN YFAY"/>
    <property type="match status" value="1"/>
</dbReference>
<dbReference type="Pfam" id="PF02464">
    <property type="entry name" value="CinA"/>
    <property type="match status" value="1"/>
</dbReference>
<dbReference type="Pfam" id="PF18146">
    <property type="entry name" value="CinA_KH"/>
    <property type="match status" value="1"/>
</dbReference>
<dbReference type="Pfam" id="PF00994">
    <property type="entry name" value="MoCF_biosynth"/>
    <property type="match status" value="1"/>
</dbReference>
<dbReference type="PIRSF" id="PIRSF006728">
    <property type="entry name" value="CinA"/>
    <property type="match status" value="1"/>
</dbReference>
<dbReference type="SMART" id="SM00852">
    <property type="entry name" value="MoCF_biosynth"/>
    <property type="match status" value="1"/>
</dbReference>
<dbReference type="SUPFAM" id="SSF142433">
    <property type="entry name" value="CinA-like"/>
    <property type="match status" value="1"/>
</dbReference>
<dbReference type="SUPFAM" id="SSF53218">
    <property type="entry name" value="Molybdenum cofactor biosynthesis proteins"/>
    <property type="match status" value="1"/>
</dbReference>
<feature type="chain" id="PRO_0000156764" description="Putative competence-damage inducible protein">
    <location>
        <begin position="1"/>
        <end position="415"/>
    </location>
</feature>
<sequence length="415" mass="45647">MASAEIIAVGTELLLGQIVNSNAAFISEELAANGIYVYHHTVVGDNPKRLKDVIDIAEKRSDILIFTGGLGPTEDDITKQILAEHLQKNLVEDAFHMNEITEYFASRNRTMTENNKLQAVIIEGSTVLNNDYGFAAGMFLKENNHTYILLPGPPSEMKPMFSSYAEPLLVSENTEKNVLESKIMRFFGIGESQLAADLNDMILAQVNPTIATYAGDNEVVVRITATAKTKEEASALVNETEQEILRRDGTFLYGYGEVSLPELVTAMLLEKNITISAAESFTAGLFQAEIARFPGISKIFKGGMVTYSEETKQSILEVSPQTIKENGVVSSECAKEMAKNVSRLCNTDIGISFTGVAGPDSLEGHPAGTIWIGLHVAGFETEAYQFVYGRDRNHNRRRAVKQGFQLIKQFLDTNK</sequence>
<evidence type="ECO:0000255" key="1">
    <source>
        <dbReference type="HAMAP-Rule" id="MF_00226"/>
    </source>
</evidence>
<comment type="similarity">
    <text evidence="1">Belongs to the CinA family.</text>
</comment>